<evidence type="ECO:0000250" key="1"/>
<evidence type="ECO:0000255" key="2"/>
<evidence type="ECO:0000305" key="3"/>
<keyword id="KW-0297">G-protein coupled receptor</keyword>
<keyword id="KW-0325">Glycoprotein</keyword>
<keyword id="KW-0472">Membrane</keyword>
<keyword id="KW-0675">Receptor</keyword>
<keyword id="KW-1185">Reference proteome</keyword>
<keyword id="KW-0716">Sensory transduction</keyword>
<keyword id="KW-0919">Taste</keyword>
<keyword id="KW-0807">Transducer</keyword>
<keyword id="KW-0812">Transmembrane</keyword>
<keyword id="KW-1133">Transmembrane helix</keyword>
<accession>Q646A9</accession>
<organism>
    <name type="scientific">Pan troglodytes</name>
    <name type="common">Chimpanzee</name>
    <dbReference type="NCBI Taxonomy" id="9598"/>
    <lineage>
        <taxon>Eukaryota</taxon>
        <taxon>Metazoa</taxon>
        <taxon>Chordata</taxon>
        <taxon>Craniata</taxon>
        <taxon>Vertebrata</taxon>
        <taxon>Euteleostomi</taxon>
        <taxon>Mammalia</taxon>
        <taxon>Eutheria</taxon>
        <taxon>Euarchontoglires</taxon>
        <taxon>Primates</taxon>
        <taxon>Haplorrhini</taxon>
        <taxon>Catarrhini</taxon>
        <taxon>Hominidae</taxon>
        <taxon>Pan</taxon>
    </lineage>
</organism>
<feature type="chain" id="PRO_0000082284" description="Taste receptor type 2 member 39">
    <location>
        <begin position="1"/>
        <end position="338"/>
    </location>
</feature>
<feature type="topological domain" description="Extracellular" evidence="2">
    <location>
        <begin position="1"/>
        <end position="30"/>
    </location>
</feature>
<feature type="transmembrane region" description="Helical; Name=1" evidence="2">
    <location>
        <begin position="31"/>
        <end position="51"/>
    </location>
</feature>
<feature type="topological domain" description="Cytoplasmic" evidence="2">
    <location>
        <begin position="52"/>
        <end position="74"/>
    </location>
</feature>
<feature type="transmembrane region" description="Helical; Name=2" evidence="2">
    <location>
        <begin position="75"/>
        <end position="95"/>
    </location>
</feature>
<feature type="topological domain" description="Extracellular" evidence="2">
    <location>
        <begin position="96"/>
        <end position="116"/>
    </location>
</feature>
<feature type="transmembrane region" description="Helical; Name=3" evidence="2">
    <location>
        <begin position="117"/>
        <end position="137"/>
    </location>
</feature>
<feature type="topological domain" description="Cytoplasmic" evidence="2">
    <location>
        <begin position="138"/>
        <end position="156"/>
    </location>
</feature>
<feature type="transmembrane region" description="Helical; Name=4" evidence="2">
    <location>
        <begin position="157"/>
        <end position="177"/>
    </location>
</feature>
<feature type="topological domain" description="Extracellular" evidence="2">
    <location>
        <begin position="178"/>
        <end position="205"/>
    </location>
</feature>
<feature type="transmembrane region" description="Helical; Name=5" evidence="2">
    <location>
        <begin position="206"/>
        <end position="226"/>
    </location>
</feature>
<feature type="topological domain" description="Cytoplasmic" evidence="2">
    <location>
        <begin position="227"/>
        <end position="262"/>
    </location>
</feature>
<feature type="transmembrane region" description="Helical; Name=6" evidence="2">
    <location>
        <begin position="263"/>
        <end position="283"/>
    </location>
</feature>
<feature type="topological domain" description="Extracellular" evidence="2">
    <location>
        <begin position="284"/>
        <end position="291"/>
    </location>
</feature>
<feature type="transmembrane region" description="Helical; Name=7" evidence="2">
    <location>
        <begin position="292"/>
        <end position="312"/>
    </location>
</feature>
<feature type="topological domain" description="Cytoplasmic" evidence="2">
    <location>
        <begin position="313"/>
        <end position="338"/>
    </location>
</feature>
<feature type="glycosylation site" description="N-linked (GlcNAc...) asparagine" evidence="2">
    <location>
        <position position="185"/>
    </location>
</feature>
<feature type="glycosylation site" description="N-linked (GlcNAc...) asparagine" evidence="2">
    <location>
        <position position="194"/>
    </location>
</feature>
<proteinExistence type="inferred from homology"/>
<sequence>MLGRCFPPDTKEKQQLRMTKLCDPAESELSPFLITLILAVLLAEYLIGIIANGFIMAIHAAEWVQNKAVSTSGRILVFLSVSRIALQSLMMLEITISSTSLSFYSEDAVYYAFKISFIFLNFCSLWFAAWLSFFYFVKIANFSYPLFLKLRWRITGLIPWLLWLSVFISFSHSMFCINICTVYCNNSFPIHSSNSTKKTYLSEINVVGLAFFFNLGIVTPLIMFILTATLLILSLKRHTLHMGSNATGSNDPSMEAHMGAIKAISYFLILYIFNAVALFIYLSNMFDINSLWNNLCQIIMAAYPAGHSILPIQDNPGLRRAWKRLQLRLHLYPKEWTL</sequence>
<gene>
    <name type="primary">TAS2R39</name>
</gene>
<name>T2R39_PANTR</name>
<reference key="1">
    <citation type="journal article" date="2005" name="Mol. Biol. Evol.">
        <title>Evolution of bitter taste receptors in humans and apes.</title>
        <authorList>
            <person name="Fischer A."/>
            <person name="Gilad Y."/>
            <person name="Man O."/>
            <person name="Paeaebo S."/>
        </authorList>
    </citation>
    <scope>NUCLEOTIDE SEQUENCE [GENOMIC DNA]</scope>
</reference>
<dbReference type="EMBL" id="AY724894">
    <property type="protein sequence ID" value="AAU21110.1"/>
    <property type="molecule type" value="Genomic_DNA"/>
</dbReference>
<dbReference type="RefSeq" id="NP_001009130.1">
    <property type="nucleotide sequence ID" value="NM_001009130.1"/>
</dbReference>
<dbReference type="RefSeq" id="XP_016800933.1">
    <property type="nucleotide sequence ID" value="XM_016945444.1"/>
</dbReference>
<dbReference type="SMR" id="Q646A9"/>
<dbReference type="FunCoup" id="Q646A9">
    <property type="interactions" value="233"/>
</dbReference>
<dbReference type="STRING" id="9598.ENSPTRP00000080378"/>
<dbReference type="GlyCosmos" id="Q646A9">
    <property type="glycosylation" value="2 sites, No reported glycans"/>
</dbReference>
<dbReference type="PaxDb" id="9598-ENSPTRP00000054249"/>
<dbReference type="Ensembl" id="ENSPTRT00000091066.1">
    <property type="protein sequence ID" value="ENSPTRP00000080378.1"/>
    <property type="gene ID" value="ENSPTRG00000048321.1"/>
</dbReference>
<dbReference type="GeneID" id="472612"/>
<dbReference type="KEGG" id="ptr:472612"/>
<dbReference type="CTD" id="259285"/>
<dbReference type="eggNOG" id="ENOG502SQHF">
    <property type="taxonomic scope" value="Eukaryota"/>
</dbReference>
<dbReference type="GeneTree" id="ENSGT01100000263477"/>
<dbReference type="InParanoid" id="Q646A9"/>
<dbReference type="OMA" id="LYMSNIF"/>
<dbReference type="OrthoDB" id="4489at9604"/>
<dbReference type="Proteomes" id="UP000002277">
    <property type="component" value="Unplaced"/>
</dbReference>
<dbReference type="GO" id="GO:0016020">
    <property type="term" value="C:membrane"/>
    <property type="evidence" value="ECO:0000318"/>
    <property type="project" value="GO_Central"/>
</dbReference>
<dbReference type="GO" id="GO:0005886">
    <property type="term" value="C:plasma membrane"/>
    <property type="evidence" value="ECO:0007669"/>
    <property type="project" value="UniProtKB-ARBA"/>
</dbReference>
<dbReference type="GO" id="GO:0033038">
    <property type="term" value="F:bitter taste receptor activity"/>
    <property type="evidence" value="ECO:0000318"/>
    <property type="project" value="GO_Central"/>
</dbReference>
<dbReference type="GO" id="GO:0004930">
    <property type="term" value="F:G protein-coupled receptor activity"/>
    <property type="evidence" value="ECO:0007669"/>
    <property type="project" value="UniProtKB-KW"/>
</dbReference>
<dbReference type="GO" id="GO:0001580">
    <property type="term" value="P:detection of chemical stimulus involved in sensory perception of bitter taste"/>
    <property type="evidence" value="ECO:0000318"/>
    <property type="project" value="GO_Central"/>
</dbReference>
<dbReference type="CDD" id="cd15015">
    <property type="entry name" value="7tm_TAS2R39"/>
    <property type="match status" value="1"/>
</dbReference>
<dbReference type="FunFam" id="1.20.1070.10:FF:000055">
    <property type="entry name" value="Taste receptor type 2"/>
    <property type="match status" value="1"/>
</dbReference>
<dbReference type="Gene3D" id="1.20.1070.10">
    <property type="entry name" value="Rhodopsin 7-helix transmembrane proteins"/>
    <property type="match status" value="1"/>
</dbReference>
<dbReference type="InterPro" id="IPR007960">
    <property type="entry name" value="TAS2R"/>
</dbReference>
<dbReference type="PANTHER" id="PTHR11394">
    <property type="entry name" value="TASTE RECEPTOR TYPE 2"/>
    <property type="match status" value="1"/>
</dbReference>
<dbReference type="PANTHER" id="PTHR11394:SF142">
    <property type="entry name" value="TASTE RECEPTOR TYPE 2 MEMBER 39"/>
    <property type="match status" value="1"/>
</dbReference>
<dbReference type="Pfam" id="PF05296">
    <property type="entry name" value="TAS2R"/>
    <property type="match status" value="1"/>
</dbReference>
<dbReference type="SUPFAM" id="SSF81321">
    <property type="entry name" value="Family A G protein-coupled receptor-like"/>
    <property type="match status" value="1"/>
</dbReference>
<comment type="function">
    <text evidence="1">Receptor that may play a role in the perception of bitterness and is gustducin-linked. May play a role in sensing the chemical composition of the gastrointestinal content. The activity of this receptor may stimulate alpha gustducin, mediate PLC-beta-2 activation and lead to the gating of TRPM5 (By similarity).</text>
</comment>
<comment type="subcellular location">
    <subcellularLocation>
        <location>Membrane</location>
        <topology>Multi-pass membrane protein</topology>
    </subcellularLocation>
</comment>
<comment type="miscellaneous">
    <text>Most taste cells may be activated by a limited number of bitter compounds; individual taste cells can discriminate among bitter stimuli.</text>
</comment>
<comment type="similarity">
    <text evidence="3">Belongs to the G-protein coupled receptor T2R family.</text>
</comment>
<protein>
    <recommendedName>
        <fullName>Taste receptor type 2 member 39</fullName>
        <shortName>T2R39</shortName>
    </recommendedName>
</protein>